<protein>
    <recommendedName>
        <fullName evidence="1">Large ribosomal subunit protein bL27</fullName>
    </recommendedName>
    <alternativeName>
        <fullName evidence="3">50S ribosomal protein L27</fullName>
    </alternativeName>
</protein>
<reference key="1">
    <citation type="journal article" date="2008" name="J. Bacteriol.">
        <title>The pangenome structure of Escherichia coli: comparative genomic analysis of E. coli commensal and pathogenic isolates.</title>
        <authorList>
            <person name="Rasko D.A."/>
            <person name="Rosovitz M.J."/>
            <person name="Myers G.S.A."/>
            <person name="Mongodin E.F."/>
            <person name="Fricke W.F."/>
            <person name="Gajer P."/>
            <person name="Crabtree J."/>
            <person name="Sebaihia M."/>
            <person name="Thomson N.R."/>
            <person name="Chaudhuri R."/>
            <person name="Henderson I.R."/>
            <person name="Sperandio V."/>
            <person name="Ravel J."/>
        </authorList>
    </citation>
    <scope>NUCLEOTIDE SEQUENCE [LARGE SCALE GENOMIC DNA]</scope>
    <source>
        <strain>E24377A / ETEC</strain>
    </source>
</reference>
<comment type="similarity">
    <text evidence="1">Belongs to the bacterial ribosomal protein bL27 family.</text>
</comment>
<organism>
    <name type="scientific">Escherichia coli O139:H28 (strain E24377A / ETEC)</name>
    <dbReference type="NCBI Taxonomy" id="331111"/>
    <lineage>
        <taxon>Bacteria</taxon>
        <taxon>Pseudomonadati</taxon>
        <taxon>Pseudomonadota</taxon>
        <taxon>Gammaproteobacteria</taxon>
        <taxon>Enterobacterales</taxon>
        <taxon>Enterobacteriaceae</taxon>
        <taxon>Escherichia</taxon>
    </lineage>
</organism>
<gene>
    <name evidence="1" type="primary">rpmA</name>
    <name type="ordered locus">EcE24377A_3670</name>
</gene>
<keyword id="KW-1185">Reference proteome</keyword>
<keyword id="KW-0687">Ribonucleoprotein</keyword>
<keyword id="KW-0689">Ribosomal protein</keyword>
<sequence>MAHKKAGGSTRNGRDSEAKRLGVKRFGGESVLAGSIIVRQRGTKFHAGANVGCGRDHTLFAKADGKVKFEVKGPKNRKFISIEAE</sequence>
<name>RL27_ECO24</name>
<feature type="chain" id="PRO_1000061044" description="Large ribosomal subunit protein bL27">
    <location>
        <begin position="1"/>
        <end position="85"/>
    </location>
</feature>
<feature type="region of interest" description="Disordered" evidence="2">
    <location>
        <begin position="1"/>
        <end position="20"/>
    </location>
</feature>
<evidence type="ECO:0000255" key="1">
    <source>
        <dbReference type="HAMAP-Rule" id="MF_00539"/>
    </source>
</evidence>
<evidence type="ECO:0000256" key="2">
    <source>
        <dbReference type="SAM" id="MobiDB-lite"/>
    </source>
</evidence>
<evidence type="ECO:0000305" key="3"/>
<proteinExistence type="inferred from homology"/>
<accession>A7ZS81</accession>
<dbReference type="EMBL" id="CP000800">
    <property type="protein sequence ID" value="ABV19502.1"/>
    <property type="molecule type" value="Genomic_DNA"/>
</dbReference>
<dbReference type="RefSeq" id="WP_000940595.1">
    <property type="nucleotide sequence ID" value="NC_009801.1"/>
</dbReference>
<dbReference type="SMR" id="A7ZS81"/>
<dbReference type="GeneID" id="93778796"/>
<dbReference type="KEGG" id="ecw:EcE24377A_3670"/>
<dbReference type="HOGENOM" id="CLU_095424_4_1_6"/>
<dbReference type="Proteomes" id="UP000001122">
    <property type="component" value="Chromosome"/>
</dbReference>
<dbReference type="GO" id="GO:0022625">
    <property type="term" value="C:cytosolic large ribosomal subunit"/>
    <property type="evidence" value="ECO:0007669"/>
    <property type="project" value="TreeGrafter"/>
</dbReference>
<dbReference type="GO" id="GO:0003735">
    <property type="term" value="F:structural constituent of ribosome"/>
    <property type="evidence" value="ECO:0007669"/>
    <property type="project" value="InterPro"/>
</dbReference>
<dbReference type="GO" id="GO:0006412">
    <property type="term" value="P:translation"/>
    <property type="evidence" value="ECO:0007669"/>
    <property type="project" value="UniProtKB-UniRule"/>
</dbReference>
<dbReference type="FunFam" id="2.40.50.100:FF:000001">
    <property type="entry name" value="50S ribosomal protein L27"/>
    <property type="match status" value="1"/>
</dbReference>
<dbReference type="Gene3D" id="2.40.50.100">
    <property type="match status" value="1"/>
</dbReference>
<dbReference type="HAMAP" id="MF_00539">
    <property type="entry name" value="Ribosomal_bL27"/>
    <property type="match status" value="1"/>
</dbReference>
<dbReference type="InterPro" id="IPR001684">
    <property type="entry name" value="Ribosomal_bL27"/>
</dbReference>
<dbReference type="InterPro" id="IPR018261">
    <property type="entry name" value="Ribosomal_bL27_CS"/>
</dbReference>
<dbReference type="NCBIfam" id="TIGR00062">
    <property type="entry name" value="L27"/>
    <property type="match status" value="1"/>
</dbReference>
<dbReference type="PANTHER" id="PTHR15893:SF0">
    <property type="entry name" value="LARGE RIBOSOMAL SUBUNIT PROTEIN BL27M"/>
    <property type="match status" value="1"/>
</dbReference>
<dbReference type="PANTHER" id="PTHR15893">
    <property type="entry name" value="RIBOSOMAL PROTEIN L27"/>
    <property type="match status" value="1"/>
</dbReference>
<dbReference type="Pfam" id="PF01016">
    <property type="entry name" value="Ribosomal_L27"/>
    <property type="match status" value="1"/>
</dbReference>
<dbReference type="PRINTS" id="PR00063">
    <property type="entry name" value="RIBOSOMALL27"/>
</dbReference>
<dbReference type="SUPFAM" id="SSF110324">
    <property type="entry name" value="Ribosomal L27 protein-like"/>
    <property type="match status" value="1"/>
</dbReference>
<dbReference type="PROSITE" id="PS00831">
    <property type="entry name" value="RIBOSOMAL_L27"/>
    <property type="match status" value="1"/>
</dbReference>